<proteinExistence type="inferred from homology"/>
<accession>A1QZH7</accession>
<protein>
    <recommendedName>
        <fullName evidence="1">DNA-directed RNA polymerase subunit beta</fullName>
        <shortName evidence="1">RNAP subunit beta</shortName>
        <ecNumber evidence="1">2.7.7.6</ecNumber>
    </recommendedName>
    <alternativeName>
        <fullName evidence="1">RNA polymerase subunit beta</fullName>
    </alternativeName>
    <alternativeName>
        <fullName evidence="1">Transcriptase subunit beta</fullName>
    </alternativeName>
</protein>
<evidence type="ECO:0000255" key="1">
    <source>
        <dbReference type="HAMAP-Rule" id="MF_01321"/>
    </source>
</evidence>
<organism>
    <name type="scientific">Borrelia turicatae (strain 91E135)</name>
    <dbReference type="NCBI Taxonomy" id="314724"/>
    <lineage>
        <taxon>Bacteria</taxon>
        <taxon>Pseudomonadati</taxon>
        <taxon>Spirochaetota</taxon>
        <taxon>Spirochaetia</taxon>
        <taxon>Spirochaetales</taxon>
        <taxon>Borreliaceae</taxon>
        <taxon>Borrelia</taxon>
    </lineage>
</organism>
<gene>
    <name evidence="1" type="primary">rpoB</name>
    <name type="ordered locus">BT0389</name>
</gene>
<sequence length="1155" mass="130066">MIKRVHLGQGKAEEILDLPNLIEIQLNSYEKFLQLDRLKNNKPLLNEGLESVFRDVFPMKSSNGEVALEYEKYYVEYDSLSFTEKECKRKGQSYEAVLKIRLNLQFLTTGEIRQKDVYMGTIPLMTDRGTFIVNGAERVIVSQIHRSPGVVFYKEKDLYYARIIPYRGSWLEFEIDSKKDYLYVKIDRKKRILVTLFLRALGLDTREKIIETFYKIKKIEVNEDTKREITGQYLAVNITIKENMTYRAGDKITLQDIEDFLQNGVKEIDLIDFDGYDSVPGKHFISSDVILNCFEKEDAYFSLKDGFKELSRESVMLAVYSVLLPGEPISIDNAENDLRTVFFSEKRYDLGHVGRYKLSKKFGLNDLTTSVLTMTDIVNTISHLLRIYDGHDVLDDIDHLGNRRVRSVGELLTNIYKGAMSRVEKIAKDRMSNKEVFNLKPQELISVKPIVSAVKEFFATSQLSQFMDQVNPLAELTHKRRLNALGPGGLSRDRAGFEVRDVHYTHYGRMCPIETPEGPNIGLIVSLATYAKVNDYGFLETPYRKVINGKVTDEIEYLSAIDEEKKCIAQANAAVNAESNYIDDLISVRVSGDYTTMIPKNIDYMDVSPRQLISVSSALIPFLEHNDANRALMGSNMQRQAVPLLFPQPPIVGTGMERIVAKDSGVVIKAKRSGTVVLATSKRIVIRPDNADDEHDLDEYELAKYERTNQDTSFNHSVLIKEGQVVNKGEIIADGPATRYGELALGNNLLVGFIPWNGFNYEDAILISERIVKEDLYTSIHIKEFSIEVRETKLGPEKVTADIPNVSGKILNKLDENGIVRIGTYVKPGDILIGKVTPKSEGDITPEFKLLTSIFGEKAKDVKNNSLKVPHGTEGTVIDVQRITKNDVGNLPPGVDEILKVYVAKKRRLKEGDKMAGRHGNKGVVAKILPVEDMPYLADGTPLDICLNPLGVPSRMNIGQLMESQLGLAGKYLSEYYDVPVFESATNECIQEKLKKAGFNETSKAILYDGYTGEPFENEVMVGIIYMLKLHHLVDDKMHARSTGPYSLVSQQPLGGKAQFGGQRLGEMEVWALEAYGAAYTLQELLTVKSDDMSGRVKIYENIVKGIPTNVSGIPESFNVLMQELRGLGFDLSIYDDNGNQIPLTEKEEELINKT</sequence>
<reference key="1">
    <citation type="submission" date="2004-12" db="EMBL/GenBank/DDBJ databases">
        <title>The genome sequence of Borrelia hermsii and Borrelia turicatae: comparative analysis of two agents of endemic N. America relapsing fever.</title>
        <authorList>
            <person name="Porcella S.F."/>
            <person name="Raffel S.J."/>
            <person name="Schrumpf M.E."/>
            <person name="Montgomery B."/>
            <person name="Smith T."/>
            <person name="Schwan T.G."/>
        </authorList>
    </citation>
    <scope>NUCLEOTIDE SEQUENCE [LARGE SCALE GENOMIC DNA]</scope>
    <source>
        <strain>91E135</strain>
    </source>
</reference>
<name>RPOB_BORT9</name>
<keyword id="KW-0240">DNA-directed RNA polymerase</keyword>
<keyword id="KW-0548">Nucleotidyltransferase</keyword>
<keyword id="KW-1185">Reference proteome</keyword>
<keyword id="KW-0804">Transcription</keyword>
<keyword id="KW-0808">Transferase</keyword>
<dbReference type="EC" id="2.7.7.6" evidence="1"/>
<dbReference type="EMBL" id="CP000049">
    <property type="protein sequence ID" value="AAX17719.1"/>
    <property type="molecule type" value="Genomic_DNA"/>
</dbReference>
<dbReference type="RefSeq" id="WP_011772338.1">
    <property type="nucleotide sequence ID" value="NC_008710.1"/>
</dbReference>
<dbReference type="SMR" id="A1QZH7"/>
<dbReference type="KEGG" id="btu:BT0389"/>
<dbReference type="eggNOG" id="COG0085">
    <property type="taxonomic scope" value="Bacteria"/>
</dbReference>
<dbReference type="HOGENOM" id="CLU_000524_4_1_12"/>
<dbReference type="Proteomes" id="UP000001205">
    <property type="component" value="Chromosome"/>
</dbReference>
<dbReference type="GO" id="GO:0000428">
    <property type="term" value="C:DNA-directed RNA polymerase complex"/>
    <property type="evidence" value="ECO:0007669"/>
    <property type="project" value="UniProtKB-KW"/>
</dbReference>
<dbReference type="GO" id="GO:0003677">
    <property type="term" value="F:DNA binding"/>
    <property type="evidence" value="ECO:0007669"/>
    <property type="project" value="UniProtKB-UniRule"/>
</dbReference>
<dbReference type="GO" id="GO:0003899">
    <property type="term" value="F:DNA-directed RNA polymerase activity"/>
    <property type="evidence" value="ECO:0007669"/>
    <property type="project" value="UniProtKB-UniRule"/>
</dbReference>
<dbReference type="GO" id="GO:0032549">
    <property type="term" value="F:ribonucleoside binding"/>
    <property type="evidence" value="ECO:0007669"/>
    <property type="project" value="InterPro"/>
</dbReference>
<dbReference type="GO" id="GO:0006351">
    <property type="term" value="P:DNA-templated transcription"/>
    <property type="evidence" value="ECO:0007669"/>
    <property type="project" value="UniProtKB-UniRule"/>
</dbReference>
<dbReference type="CDD" id="cd00653">
    <property type="entry name" value="RNA_pol_B_RPB2"/>
    <property type="match status" value="1"/>
</dbReference>
<dbReference type="Gene3D" id="2.40.50.100">
    <property type="match status" value="1"/>
</dbReference>
<dbReference type="Gene3D" id="2.40.50.150">
    <property type="match status" value="1"/>
</dbReference>
<dbReference type="Gene3D" id="3.90.1100.10">
    <property type="match status" value="2"/>
</dbReference>
<dbReference type="Gene3D" id="2.30.150.10">
    <property type="entry name" value="DNA-directed RNA polymerase, beta subunit, external 1 domain"/>
    <property type="match status" value="1"/>
</dbReference>
<dbReference type="Gene3D" id="2.40.270.10">
    <property type="entry name" value="DNA-directed RNA polymerase, subunit 2, domain 6"/>
    <property type="match status" value="2"/>
</dbReference>
<dbReference type="Gene3D" id="3.90.1800.10">
    <property type="entry name" value="RNA polymerase alpha subunit dimerisation domain"/>
    <property type="match status" value="1"/>
</dbReference>
<dbReference type="Gene3D" id="3.90.1110.10">
    <property type="entry name" value="RNA polymerase Rpb2, domain 2"/>
    <property type="match status" value="2"/>
</dbReference>
<dbReference type="HAMAP" id="MF_01321">
    <property type="entry name" value="RNApol_bact_RpoB"/>
    <property type="match status" value="1"/>
</dbReference>
<dbReference type="InterPro" id="IPR042107">
    <property type="entry name" value="DNA-dir_RNA_pol_bsu_ext_1_sf"/>
</dbReference>
<dbReference type="InterPro" id="IPR019462">
    <property type="entry name" value="DNA-dir_RNA_pol_bsu_external_1"/>
</dbReference>
<dbReference type="InterPro" id="IPR015712">
    <property type="entry name" value="DNA-dir_RNA_pol_su2"/>
</dbReference>
<dbReference type="InterPro" id="IPR007120">
    <property type="entry name" value="DNA-dir_RNAP_su2_dom"/>
</dbReference>
<dbReference type="InterPro" id="IPR037033">
    <property type="entry name" value="DNA-dir_RNAP_su2_hyb_sf"/>
</dbReference>
<dbReference type="InterPro" id="IPR010243">
    <property type="entry name" value="RNA_pol_bsu_bac"/>
</dbReference>
<dbReference type="InterPro" id="IPR007121">
    <property type="entry name" value="RNA_pol_bsu_CS"/>
</dbReference>
<dbReference type="InterPro" id="IPR007644">
    <property type="entry name" value="RNA_pol_bsu_protrusion"/>
</dbReference>
<dbReference type="InterPro" id="IPR007642">
    <property type="entry name" value="RNA_pol_Rpb2_2"/>
</dbReference>
<dbReference type="InterPro" id="IPR037034">
    <property type="entry name" value="RNA_pol_Rpb2_2_sf"/>
</dbReference>
<dbReference type="InterPro" id="IPR007645">
    <property type="entry name" value="RNA_pol_Rpb2_3"/>
</dbReference>
<dbReference type="InterPro" id="IPR007641">
    <property type="entry name" value="RNA_pol_Rpb2_7"/>
</dbReference>
<dbReference type="InterPro" id="IPR014724">
    <property type="entry name" value="RNA_pol_RPB2_OB-fold"/>
</dbReference>
<dbReference type="NCBIfam" id="NF001616">
    <property type="entry name" value="PRK00405.1"/>
    <property type="match status" value="1"/>
</dbReference>
<dbReference type="NCBIfam" id="TIGR02013">
    <property type="entry name" value="rpoB"/>
    <property type="match status" value="1"/>
</dbReference>
<dbReference type="PANTHER" id="PTHR20856">
    <property type="entry name" value="DNA-DIRECTED RNA POLYMERASE I SUBUNIT 2"/>
    <property type="match status" value="1"/>
</dbReference>
<dbReference type="Pfam" id="PF04563">
    <property type="entry name" value="RNA_pol_Rpb2_1"/>
    <property type="match status" value="1"/>
</dbReference>
<dbReference type="Pfam" id="PF04561">
    <property type="entry name" value="RNA_pol_Rpb2_2"/>
    <property type="match status" value="2"/>
</dbReference>
<dbReference type="Pfam" id="PF04565">
    <property type="entry name" value="RNA_pol_Rpb2_3"/>
    <property type="match status" value="1"/>
</dbReference>
<dbReference type="Pfam" id="PF10385">
    <property type="entry name" value="RNA_pol_Rpb2_45"/>
    <property type="match status" value="1"/>
</dbReference>
<dbReference type="Pfam" id="PF00562">
    <property type="entry name" value="RNA_pol_Rpb2_6"/>
    <property type="match status" value="1"/>
</dbReference>
<dbReference type="Pfam" id="PF04560">
    <property type="entry name" value="RNA_pol_Rpb2_7"/>
    <property type="match status" value="1"/>
</dbReference>
<dbReference type="SUPFAM" id="SSF64484">
    <property type="entry name" value="beta and beta-prime subunits of DNA dependent RNA-polymerase"/>
    <property type="match status" value="1"/>
</dbReference>
<dbReference type="PROSITE" id="PS01166">
    <property type="entry name" value="RNA_POL_BETA"/>
    <property type="match status" value="1"/>
</dbReference>
<comment type="function">
    <text evidence="1">DNA-dependent RNA polymerase catalyzes the transcription of DNA into RNA using the four ribonucleoside triphosphates as substrates.</text>
</comment>
<comment type="catalytic activity">
    <reaction evidence="1">
        <text>RNA(n) + a ribonucleoside 5'-triphosphate = RNA(n+1) + diphosphate</text>
        <dbReference type="Rhea" id="RHEA:21248"/>
        <dbReference type="Rhea" id="RHEA-COMP:14527"/>
        <dbReference type="Rhea" id="RHEA-COMP:17342"/>
        <dbReference type="ChEBI" id="CHEBI:33019"/>
        <dbReference type="ChEBI" id="CHEBI:61557"/>
        <dbReference type="ChEBI" id="CHEBI:140395"/>
        <dbReference type="EC" id="2.7.7.6"/>
    </reaction>
</comment>
<comment type="subunit">
    <text evidence="1">The RNAP catalytic core consists of 2 alpha, 1 beta, 1 beta' and 1 omega subunit. When a sigma factor is associated with the core the holoenzyme is formed, which can initiate transcription.</text>
</comment>
<comment type="similarity">
    <text evidence="1">Belongs to the RNA polymerase beta chain family.</text>
</comment>
<feature type="chain" id="PRO_1000165791" description="DNA-directed RNA polymerase subunit beta">
    <location>
        <begin position="1"/>
        <end position="1155"/>
    </location>
</feature>